<gene>
    <name type="primary">GNL1</name>
    <name type="ORF">QtsA-10775</name>
    <name type="ORF">QtsA-12735</name>
</gene>
<feature type="chain" id="PRO_0000295688" description="Guanine nucleotide-binding protein-like 1">
    <location>
        <begin position="1"/>
        <end position="607"/>
    </location>
</feature>
<feature type="domain" description="CP-type G" evidence="4">
    <location>
        <begin position="178"/>
        <end position="418"/>
    </location>
</feature>
<feature type="region of interest" description="Disordered" evidence="5">
    <location>
        <begin position="1"/>
        <end position="81"/>
    </location>
</feature>
<feature type="region of interest" description="Disordered" evidence="5">
    <location>
        <begin position="547"/>
        <end position="607"/>
    </location>
</feature>
<feature type="compositionally biased region" description="Basic residues" evidence="5">
    <location>
        <begin position="1"/>
        <end position="14"/>
    </location>
</feature>
<feature type="compositionally biased region" description="Basic and acidic residues" evidence="5">
    <location>
        <begin position="15"/>
        <end position="26"/>
    </location>
</feature>
<feature type="compositionally biased region" description="Acidic residues" evidence="5">
    <location>
        <begin position="550"/>
        <end position="584"/>
    </location>
</feature>
<feature type="binding site" evidence="3">
    <location>
        <begin position="225"/>
        <end position="228"/>
    </location>
    <ligand>
        <name>GTP</name>
        <dbReference type="ChEBI" id="CHEBI:37565"/>
    </ligand>
</feature>
<feature type="binding site" evidence="3">
    <location>
        <begin position="367"/>
        <end position="374"/>
    </location>
    <ligand>
        <name>GTP</name>
        <dbReference type="ChEBI" id="CHEBI:37565"/>
    </ligand>
</feature>
<feature type="binding site" evidence="3">
    <location>
        <begin position="411"/>
        <end position="415"/>
    </location>
    <ligand>
        <name>GTP</name>
        <dbReference type="ChEBI" id="CHEBI:37565"/>
    </ligand>
</feature>
<feature type="modified residue" description="Phosphoserine" evidence="2">
    <location>
        <position position="32"/>
    </location>
</feature>
<feature type="modified residue" description="Phosphoserine" evidence="2">
    <location>
        <position position="33"/>
    </location>
</feature>
<feature type="modified residue" description="Phosphoserine" evidence="2">
    <location>
        <position position="34"/>
    </location>
</feature>
<feature type="modified residue" description="Phosphothreonine" evidence="2">
    <location>
        <position position="48"/>
    </location>
</feature>
<feature type="modified residue" description="Phosphothreonine" evidence="2">
    <location>
        <position position="50"/>
    </location>
</feature>
<feature type="modified residue" description="Phosphoserine" evidence="2">
    <location>
        <position position="51"/>
    </location>
</feature>
<feature type="modified residue" description="Phosphoserine" evidence="2">
    <location>
        <position position="68"/>
    </location>
</feature>
<feature type="modified residue" description="Phosphoserine" evidence="2">
    <location>
        <position position="324"/>
    </location>
</feature>
<feature type="modified residue" description="Phosphoserine" evidence="2">
    <location>
        <position position="561"/>
    </location>
</feature>
<feature type="modified residue" description="Phosphoserine" evidence="2">
    <location>
        <position position="562"/>
    </location>
</feature>
<feature type="modified residue" description="Phosphoserine" evidence="2">
    <location>
        <position position="563"/>
    </location>
</feature>
<feature type="sequence conflict" description="In Ref. 1; BAE00382." evidence="6" ref="1">
    <original>K</original>
    <variation>E</variation>
    <location>
        <position position="10"/>
    </location>
</feature>
<protein>
    <recommendedName>
        <fullName>Guanine nucleotide-binding protein-like 1</fullName>
    </recommendedName>
</protein>
<sequence>MPRKKPFSVKQKKKQLQDKRERKRGLQDGLRSSSNSRSGSRERREEQTDTSDGESVTHHIRRLNQQPSQGLGPRGYDPNRYRLHFERDSREEVERRKRAAREQVLQPVSAEVLELDIREVYQPGSVLDFPRRPPWSYEMSKEQLMSQEERSFQEYLGKIHGAYSSEKLSYFEHNLETWRQLWRVLEMSDIVLLITDIRHPVVNFPPALYEYVTGELGLALVLVLNKVDLAPPALVVAWKHYFHQHYPQLHVVLFTSFPRDPRTPQDPSSVLKKSRRRGRGWTRALGPEQLLRACEAITVGKVDLSSWREKIARDVAGATWGNGSGEEEEEDDGPAVLVEQQTDSAMEPTGPTRERYKDGVVTIGCVGFPNVGKSSLINGLVGRKVVSVSRTPGHTRYFQTYFLTPSVKLCDCPGLIFPSLLPRQLQVLAGIYPIAQIQEPYTAVGYLASRIPVQALLHLRHPEAEDPSAEHPWCAWDICEAWAEKRGYKTAKAARNDVYRAANSLLRLAVDGRLSLCFHPPGYSEQKGTWESHPETTELVVLQGRVGPAGDEEEEEEEELSSSCEEEGEEDRDADEEGEGDEDTPTSAPGSSLAGRNPYALLGEDEC</sequence>
<accession>Q4R8D2</accession>
<accession>Q4R939</accession>
<evidence type="ECO:0000250" key="1"/>
<evidence type="ECO:0000250" key="2">
    <source>
        <dbReference type="UniProtKB" id="P36915"/>
    </source>
</evidence>
<evidence type="ECO:0000255" key="3"/>
<evidence type="ECO:0000255" key="4">
    <source>
        <dbReference type="PROSITE-ProRule" id="PRU01058"/>
    </source>
</evidence>
<evidence type="ECO:0000256" key="5">
    <source>
        <dbReference type="SAM" id="MobiDB-lite"/>
    </source>
</evidence>
<evidence type="ECO:0000305" key="6"/>
<proteinExistence type="evidence at transcript level"/>
<organism>
    <name type="scientific">Macaca fascicularis</name>
    <name type="common">Crab-eating macaque</name>
    <name type="synonym">Cynomolgus monkey</name>
    <dbReference type="NCBI Taxonomy" id="9541"/>
    <lineage>
        <taxon>Eukaryota</taxon>
        <taxon>Metazoa</taxon>
        <taxon>Chordata</taxon>
        <taxon>Craniata</taxon>
        <taxon>Vertebrata</taxon>
        <taxon>Euteleostomi</taxon>
        <taxon>Mammalia</taxon>
        <taxon>Eutheria</taxon>
        <taxon>Euarchontoglires</taxon>
        <taxon>Primates</taxon>
        <taxon>Haplorrhini</taxon>
        <taxon>Catarrhini</taxon>
        <taxon>Cercopithecidae</taxon>
        <taxon>Cercopithecinae</taxon>
        <taxon>Macaca</taxon>
    </lineage>
</organism>
<reference key="1">
    <citation type="submission" date="2005-06" db="EMBL/GenBank/DDBJ databases">
        <title>DNA sequences of macaque genes expressed in brain or testis and its evolutionary implications.</title>
        <authorList>
            <consortium name="International consortium for macaque cDNA sequencing and analysis"/>
        </authorList>
    </citation>
    <scope>NUCLEOTIDE SEQUENCE [LARGE SCALE MRNA]</scope>
    <source>
        <tissue>Testis</tissue>
    </source>
</reference>
<comment type="function">
    <text evidence="1">Possible regulatory or functional link with the histocompatibility cluster.</text>
</comment>
<comment type="domain">
    <text>In contrast to other GTP-binding proteins, this family is characterized by a circular permutation of the GTPase motifs described by a G4-G1-G3 pattern.</text>
</comment>
<comment type="similarity">
    <text evidence="4">Belongs to the TRAFAC class YlqF/YawG GTPase family.</text>
</comment>
<name>GNL1_MACFA</name>
<keyword id="KW-0342">GTP-binding</keyword>
<keyword id="KW-0547">Nucleotide-binding</keyword>
<keyword id="KW-0597">Phosphoprotein</keyword>
<keyword id="KW-1185">Reference proteome</keyword>
<dbReference type="EMBL" id="AB168258">
    <property type="protein sequence ID" value="BAE00382.1"/>
    <property type="molecule type" value="mRNA"/>
</dbReference>
<dbReference type="EMBL" id="AB168522">
    <property type="protein sequence ID" value="BAE00640.1"/>
    <property type="molecule type" value="mRNA"/>
</dbReference>
<dbReference type="RefSeq" id="XP_005553701.1">
    <property type="nucleotide sequence ID" value="XM_005553644.4"/>
</dbReference>
<dbReference type="STRING" id="9541.ENSMFAP00000008391"/>
<dbReference type="Ensembl" id="ENSMFAT00000098093.1">
    <property type="protein sequence ID" value="ENSMFAP00000051961.1"/>
    <property type="gene ID" value="ENSMFAG00000001167.2"/>
</dbReference>
<dbReference type="GeneID" id="101926006"/>
<dbReference type="KEGG" id="mcf:101926006"/>
<dbReference type="CTD" id="2794"/>
<dbReference type="VEuPathDB" id="HostDB:ENSMFAG00000001167"/>
<dbReference type="eggNOG" id="KOG1424">
    <property type="taxonomic scope" value="Eukaryota"/>
</dbReference>
<dbReference type="GeneTree" id="ENSGT00940000158047"/>
<dbReference type="OrthoDB" id="9849at314294"/>
<dbReference type="Proteomes" id="UP000233100">
    <property type="component" value="Chromosome 4"/>
</dbReference>
<dbReference type="Bgee" id="ENSMFAG00000001167">
    <property type="expression patterns" value="Expressed in temporal lobe and 13 other cell types or tissues"/>
</dbReference>
<dbReference type="GO" id="GO:0005525">
    <property type="term" value="F:GTP binding"/>
    <property type="evidence" value="ECO:0007669"/>
    <property type="project" value="UniProtKB-KW"/>
</dbReference>
<dbReference type="GO" id="GO:0003924">
    <property type="term" value="F:GTPase activity"/>
    <property type="evidence" value="ECO:0007669"/>
    <property type="project" value="InterPro"/>
</dbReference>
<dbReference type="CDD" id="cd01857">
    <property type="entry name" value="HSR1_MMR1"/>
    <property type="match status" value="1"/>
</dbReference>
<dbReference type="Gene3D" id="3.40.50.300">
    <property type="entry name" value="P-loop containing nucleotide triphosphate hydrolases"/>
    <property type="match status" value="1"/>
</dbReference>
<dbReference type="InterPro" id="IPR030378">
    <property type="entry name" value="G_CP_dom"/>
</dbReference>
<dbReference type="InterPro" id="IPR043358">
    <property type="entry name" value="GNL1-like"/>
</dbReference>
<dbReference type="InterPro" id="IPR006073">
    <property type="entry name" value="GTP-bd"/>
</dbReference>
<dbReference type="InterPro" id="IPR027417">
    <property type="entry name" value="P-loop_NTPase"/>
</dbReference>
<dbReference type="PANTHER" id="PTHR45709:SF3">
    <property type="entry name" value="GUANINE NUCLEOTIDE-BINDING PROTEIN-LIKE 1"/>
    <property type="match status" value="1"/>
</dbReference>
<dbReference type="PANTHER" id="PTHR45709">
    <property type="entry name" value="LARGE SUBUNIT GTPASE 1 HOMOLOG-RELATED"/>
    <property type="match status" value="1"/>
</dbReference>
<dbReference type="Pfam" id="PF01926">
    <property type="entry name" value="MMR_HSR1"/>
    <property type="match status" value="1"/>
</dbReference>
<dbReference type="SUPFAM" id="SSF52540">
    <property type="entry name" value="P-loop containing nucleoside triphosphate hydrolases"/>
    <property type="match status" value="1"/>
</dbReference>
<dbReference type="PROSITE" id="PS51721">
    <property type="entry name" value="G_CP"/>
    <property type="match status" value="1"/>
</dbReference>